<proteinExistence type="evidence at transcript level"/>
<organism>
    <name type="scientific">Pongo abelii</name>
    <name type="common">Sumatran orangutan</name>
    <name type="synonym">Pongo pygmaeus abelii</name>
    <dbReference type="NCBI Taxonomy" id="9601"/>
    <lineage>
        <taxon>Eukaryota</taxon>
        <taxon>Metazoa</taxon>
        <taxon>Chordata</taxon>
        <taxon>Craniata</taxon>
        <taxon>Vertebrata</taxon>
        <taxon>Euteleostomi</taxon>
        <taxon>Mammalia</taxon>
        <taxon>Eutheria</taxon>
        <taxon>Euarchontoglires</taxon>
        <taxon>Primates</taxon>
        <taxon>Haplorrhini</taxon>
        <taxon>Catarrhini</taxon>
        <taxon>Hominidae</taxon>
        <taxon>Pongo</taxon>
    </lineage>
</organism>
<comment type="function">
    <text evidence="1 2">Postsynaptic adhesion molecule that binds to presynaptic neurexins to mediate both excitatory and inhibitory synapse formation. Promotes synapse development by acting as a cell adhesion molecule at the postsynaptic membrane, which associates with both neurexin-alpha and neurexin-beta proteins at the presynaptic membrane (By similarity). Regulates the balance between excitatory and inhibitory synapses by inhibiting formation of excitatory parallel-fiber synapses and promoting formation of inhibitory synapses in the same neuron (By similarity). May also be involved in ascorbate (vitamin C) uptake via its interaction with SLC23A2/SVCT2. Complex formation with APBA2 and APP, stabilizes APP metabolism and enhances APBA2-mediated suppression of beta-APP40 secretion, due to the retardation of intracellular APP maturation (By similarity).</text>
</comment>
<comment type="subunit">
    <text evidence="1 2">Interacts (via cadherin domains) with both alpha and beta isoforms of neurexins (NRXN1, NRXN2 and NRXN3) (By similarity). Directly interacts with APBA2. Forms a tripartite complex with APBA2 and APP (By similarity). Interacts with low affinity with KLC1 (By similarity). Interacts with SLC23A2/SVCT2 (By similarity).</text>
</comment>
<comment type="subcellular location">
    <subcellularLocation>
        <location evidence="1">Postsynaptic cell membrane</location>
        <topology evidence="4">Single-pass type I membrane protein</topology>
    </subcellularLocation>
    <subcellularLocation>
        <location evidence="1">Endoplasmic reticulum membrane</location>
        <topology evidence="4">Single-pass type I membrane protein</topology>
    </subcellularLocation>
    <subcellularLocation>
        <location evidence="1">Golgi apparatus membrane</location>
        <topology evidence="4">Single-pass type I membrane protein</topology>
    </subcellularLocation>
    <subcellularLocation>
        <location evidence="1">Cell projection</location>
        <location evidence="1">Dendrite</location>
    </subcellularLocation>
    <text evidence="1">Most prominent in the postsynaptic specializations of asymmetric (type I) synapses with both axodendritic and axospinous localization.</text>
</comment>
<comment type="domain">
    <text evidence="3">The cytoplasmic domain binds synaptic Ca(2+).</text>
</comment>
<comment type="PTM">
    <text evidence="2">Proteolytically processed under normal cellular conditions. A primary zeta-cleavage generates a large extracellular (soluble) N-terminal domain (sAlc) and a short C-terminal transmembrane fragment (CTF1). A secondary cleavage catalyzed by gamma-secretase within the transmembrane domain releases the beta-Alc-beta chain in the extracellular milieu and produces an intracellular fragment (AlcICD). This processing is strongly suppressed in the tripartite complex formed with APBA2 and APP, which seems to prevent the association with gamma-secretase.</text>
</comment>
<comment type="similarity">
    <text evidence="7">Belongs to the calsyntenin family.</text>
</comment>
<reference key="1">
    <citation type="submission" date="2004-11" db="EMBL/GenBank/DDBJ databases">
        <authorList>
            <consortium name="The German cDNA consortium"/>
        </authorList>
    </citation>
    <scope>NUCLEOTIDE SEQUENCE [LARGE SCALE MRNA]</scope>
    <source>
        <tissue>Kidney</tissue>
    </source>
</reference>
<sequence length="956" mass="106095">MTLLLLPLLLASLLASCSCNKANKHKPWIEAEYQGIVMENDNTVLLNPPLFALDKDAPLRYAGEICGFRLHGSGVPFEAVILDKATGEGRIRAKEPMDCEAQKEHTFTIQAYDCGEGPDGANTKKSHKATVHVRVNDVNEFAPVFVERLYRAAVTEGKLYDRILRVEAIDGDCSPQYSQICYYEILTPNTPFLIDNDGNIENTEKLQYSGERLYKFTVTAYDCGKKRAADDAEVEIQVKPTCKPSWQGWNKRIEYAPGAGSLALFPGIRLETCDEPLWNIQATIELQTSHVAKGCDRDNYSERALRKLCGAATGEVDLLPMPGPNANWTAGLSVHYSQDSSQIYWFNGTQAVQVPLGGPSGLGSGPQDSLSDHFTLSFWMKHGVTPNKGKKEEETIVCNTVQNEDGFSHYSLTVHGCRIAFLYWPLLESARPVKFLWKLEQVCDDEWHHYALNLEFPTVTLYTDGISFDPALIHDNGLIHPPRREPALMIGACWTEGKNKEKEKGDNSTDTTQGDPLSIQRYFHGYLAGFSVRSGRLESREVIECLYACREGLDYRDFESLGKGMKVHVNPSQSLLTLEGDDVETFNHALQHVAYMNTLRFATPGVRPLRLTTAVKCFSEESCVSIPEVEGYVVVLQPDAPQILLSGTAHFARPAVDFEGTEGVPLFPDLQITCSISHQVEAKKDESWQGTVTDTRMSDEIVHNLDGCEISLVGDDLDPERESLLLDTTSLQQRGLELTNTSAYLTIAGVESITVYEEILRQARYRLRHGAALYARKFRLSCSEMNGRYSSNEFIVEVNVLHSMNRVAHPSHVLSSQQFLHRGHQPPPEMAGHSLASSHRNSMIPSAATLIIVVCVGFLVLMVVLGLVRIHSLHRRVSGAGGPPGASSDPKDPDLFWDDSALTIIVNPMESYQNRQACVTGAVGGQQEDEDSSDSEVADSPSSDERRIIETPPHRY</sequence>
<feature type="signal peptide" evidence="4">
    <location>
        <begin position="1"/>
        <end position="19"/>
    </location>
</feature>
<feature type="chain" id="PRO_0000269184" description="Calsyntenin-3">
    <location>
        <begin position="20"/>
        <end position="956"/>
    </location>
</feature>
<feature type="topological domain" description="Extracellular" evidence="4">
    <location>
        <begin position="20"/>
        <end position="847"/>
    </location>
</feature>
<feature type="transmembrane region" description="Helical" evidence="4">
    <location>
        <begin position="848"/>
        <end position="868"/>
    </location>
</feature>
<feature type="topological domain" description="Cytoplasmic" evidence="4">
    <location>
        <begin position="869"/>
        <end position="956"/>
    </location>
</feature>
<feature type="domain" description="Cadherin 1" evidence="5">
    <location>
        <begin position="29"/>
        <end position="145"/>
    </location>
</feature>
<feature type="domain" description="Cadherin 2" evidence="5">
    <location>
        <begin position="146"/>
        <end position="246"/>
    </location>
</feature>
<feature type="region of interest" description="Disordered" evidence="6">
    <location>
        <begin position="917"/>
        <end position="956"/>
    </location>
</feature>
<feature type="compositionally biased region" description="Acidic residues" evidence="6">
    <location>
        <begin position="927"/>
        <end position="937"/>
    </location>
</feature>
<feature type="compositionally biased region" description="Basic and acidic residues" evidence="6">
    <location>
        <begin position="943"/>
        <end position="956"/>
    </location>
</feature>
<feature type="glycosylation site" description="N-linked (GlcNAc...) asparagine" evidence="4">
    <location>
        <position position="299"/>
    </location>
</feature>
<feature type="glycosylation site" description="N-linked (GlcNAc...) asparagine" evidence="4">
    <location>
        <position position="327"/>
    </location>
</feature>
<feature type="glycosylation site" description="N-linked (GlcNAc...) asparagine" evidence="4">
    <location>
        <position position="347"/>
    </location>
</feature>
<feature type="glycosylation site" description="N-linked (GlcNAc...) asparagine" evidence="4">
    <location>
        <position position="507"/>
    </location>
</feature>
<feature type="glycosylation site" description="N-linked (GlcNAc...) asparagine" evidence="4">
    <location>
        <position position="740"/>
    </location>
</feature>
<keyword id="KW-0106">Calcium</keyword>
<keyword id="KW-0130">Cell adhesion</keyword>
<keyword id="KW-1003">Cell membrane</keyword>
<keyword id="KW-0966">Cell projection</keyword>
<keyword id="KW-0256">Endoplasmic reticulum</keyword>
<keyword id="KW-0325">Glycoprotein</keyword>
<keyword id="KW-0333">Golgi apparatus</keyword>
<keyword id="KW-0472">Membrane</keyword>
<keyword id="KW-0628">Postsynaptic cell membrane</keyword>
<keyword id="KW-1185">Reference proteome</keyword>
<keyword id="KW-0677">Repeat</keyword>
<keyword id="KW-0732">Signal</keyword>
<keyword id="KW-0770">Synapse</keyword>
<keyword id="KW-0812">Transmembrane</keyword>
<keyword id="KW-1133">Transmembrane helix</keyword>
<dbReference type="EMBL" id="CR859323">
    <property type="protein sequence ID" value="CAH91501.1"/>
    <property type="molecule type" value="mRNA"/>
</dbReference>
<dbReference type="RefSeq" id="NP_001127427.1">
    <property type="nucleotide sequence ID" value="NM_001133955.1"/>
</dbReference>
<dbReference type="SMR" id="Q5R9Q9"/>
<dbReference type="FunCoup" id="Q5R9Q9">
    <property type="interactions" value="283"/>
</dbReference>
<dbReference type="STRING" id="9601.ENSPPYP00000004814"/>
<dbReference type="GlyCosmos" id="Q5R9Q9">
    <property type="glycosylation" value="5 sites, No reported glycans"/>
</dbReference>
<dbReference type="GeneID" id="100174497"/>
<dbReference type="KEGG" id="pon:100174497"/>
<dbReference type="CTD" id="9746"/>
<dbReference type="eggNOG" id="KOG1834">
    <property type="taxonomic scope" value="Eukaryota"/>
</dbReference>
<dbReference type="InParanoid" id="Q5R9Q9"/>
<dbReference type="OrthoDB" id="10012272at2759"/>
<dbReference type="Proteomes" id="UP000001595">
    <property type="component" value="Unplaced"/>
</dbReference>
<dbReference type="GO" id="GO:0009986">
    <property type="term" value="C:cell surface"/>
    <property type="evidence" value="ECO:0007669"/>
    <property type="project" value="TreeGrafter"/>
</dbReference>
<dbReference type="GO" id="GO:0030425">
    <property type="term" value="C:dendrite"/>
    <property type="evidence" value="ECO:0007669"/>
    <property type="project" value="UniProtKB-SubCell"/>
</dbReference>
<dbReference type="GO" id="GO:0005789">
    <property type="term" value="C:endoplasmic reticulum membrane"/>
    <property type="evidence" value="ECO:0007669"/>
    <property type="project" value="UniProtKB-SubCell"/>
</dbReference>
<dbReference type="GO" id="GO:0000139">
    <property type="term" value="C:Golgi membrane"/>
    <property type="evidence" value="ECO:0007669"/>
    <property type="project" value="UniProtKB-SubCell"/>
</dbReference>
<dbReference type="GO" id="GO:0045211">
    <property type="term" value="C:postsynaptic membrane"/>
    <property type="evidence" value="ECO:0007669"/>
    <property type="project" value="UniProtKB-SubCell"/>
</dbReference>
<dbReference type="GO" id="GO:0005509">
    <property type="term" value="F:calcium ion binding"/>
    <property type="evidence" value="ECO:0007669"/>
    <property type="project" value="InterPro"/>
</dbReference>
<dbReference type="GO" id="GO:0098632">
    <property type="term" value="F:cell-cell adhesion mediator activity"/>
    <property type="evidence" value="ECO:0000250"/>
    <property type="project" value="UniProtKB"/>
</dbReference>
<dbReference type="GO" id="GO:0042043">
    <property type="term" value="F:neurexin family protein binding"/>
    <property type="evidence" value="ECO:0000250"/>
    <property type="project" value="UniProtKB"/>
</dbReference>
<dbReference type="GO" id="GO:1904861">
    <property type="term" value="P:excitatory synapse assembly"/>
    <property type="evidence" value="ECO:0000250"/>
    <property type="project" value="UniProtKB"/>
</dbReference>
<dbReference type="GO" id="GO:0007156">
    <property type="term" value="P:homophilic cell adhesion via plasma membrane adhesion molecules"/>
    <property type="evidence" value="ECO:0007669"/>
    <property type="project" value="InterPro"/>
</dbReference>
<dbReference type="GO" id="GO:1904862">
    <property type="term" value="P:inhibitory synapse assembly"/>
    <property type="evidence" value="ECO:0000250"/>
    <property type="project" value="UniProtKB"/>
</dbReference>
<dbReference type="GO" id="GO:1904890">
    <property type="term" value="P:negative regulation of excitatory synapse assembly"/>
    <property type="evidence" value="ECO:0000250"/>
    <property type="project" value="UniProtKB"/>
</dbReference>
<dbReference type="GO" id="GO:1905704">
    <property type="term" value="P:positive regulation of inhibitory synapse assembly"/>
    <property type="evidence" value="ECO:0000250"/>
    <property type="project" value="UniProtKB"/>
</dbReference>
<dbReference type="GO" id="GO:0050806">
    <property type="term" value="P:positive regulation of synaptic transmission"/>
    <property type="evidence" value="ECO:0007669"/>
    <property type="project" value="TreeGrafter"/>
</dbReference>
<dbReference type="GO" id="GO:1904889">
    <property type="term" value="P:regulation of excitatory synapse assembly"/>
    <property type="evidence" value="ECO:0000250"/>
    <property type="project" value="UniProtKB"/>
</dbReference>
<dbReference type="CDD" id="cd11304">
    <property type="entry name" value="Cadherin_repeat"/>
    <property type="match status" value="2"/>
</dbReference>
<dbReference type="FunFam" id="2.60.40.60:FF:000025">
    <property type="entry name" value="Calsyntenin 1"/>
    <property type="match status" value="1"/>
</dbReference>
<dbReference type="FunFam" id="2.60.120.200:FF:000069">
    <property type="entry name" value="Calsyntenin 3"/>
    <property type="match status" value="1"/>
</dbReference>
<dbReference type="FunFam" id="2.60.40.60:FF:000062">
    <property type="entry name" value="Calsyntenin 3"/>
    <property type="match status" value="1"/>
</dbReference>
<dbReference type="Gene3D" id="2.60.120.200">
    <property type="match status" value="1"/>
</dbReference>
<dbReference type="Gene3D" id="2.60.40.60">
    <property type="entry name" value="Cadherins"/>
    <property type="match status" value="2"/>
</dbReference>
<dbReference type="InterPro" id="IPR002126">
    <property type="entry name" value="Cadherin-like_dom"/>
</dbReference>
<dbReference type="InterPro" id="IPR015919">
    <property type="entry name" value="Cadherin-like_sf"/>
</dbReference>
<dbReference type="InterPro" id="IPR045588">
    <property type="entry name" value="CLSTN_C"/>
</dbReference>
<dbReference type="InterPro" id="IPR013320">
    <property type="entry name" value="ConA-like_dom_sf"/>
</dbReference>
<dbReference type="PANTHER" id="PTHR14139">
    <property type="entry name" value="CALSYNTENIN"/>
    <property type="match status" value="1"/>
</dbReference>
<dbReference type="PANTHER" id="PTHR14139:SF5">
    <property type="entry name" value="CALSYNTENIN-3"/>
    <property type="match status" value="1"/>
</dbReference>
<dbReference type="Pfam" id="PF19699">
    <property type="entry name" value="CLSTN_C"/>
    <property type="match status" value="1"/>
</dbReference>
<dbReference type="PRINTS" id="PR00205">
    <property type="entry name" value="CADHERIN"/>
</dbReference>
<dbReference type="SMART" id="SM00112">
    <property type="entry name" value="CA"/>
    <property type="match status" value="2"/>
</dbReference>
<dbReference type="SUPFAM" id="SSF49313">
    <property type="entry name" value="Cadherin-like"/>
    <property type="match status" value="2"/>
</dbReference>
<dbReference type="SUPFAM" id="SSF49899">
    <property type="entry name" value="Concanavalin A-like lectins/glucanases"/>
    <property type="match status" value="1"/>
</dbReference>
<dbReference type="PROSITE" id="PS50268">
    <property type="entry name" value="CADHERIN_2"/>
    <property type="match status" value="2"/>
</dbReference>
<evidence type="ECO:0000250" key="1">
    <source>
        <dbReference type="UniProtKB" id="Q99JH7"/>
    </source>
</evidence>
<evidence type="ECO:0000250" key="2">
    <source>
        <dbReference type="UniProtKB" id="Q9BQT9"/>
    </source>
</evidence>
<evidence type="ECO:0000250" key="3">
    <source>
        <dbReference type="UniProtKB" id="Q9EPL2"/>
    </source>
</evidence>
<evidence type="ECO:0000255" key="4"/>
<evidence type="ECO:0000255" key="5">
    <source>
        <dbReference type="PROSITE-ProRule" id="PRU00043"/>
    </source>
</evidence>
<evidence type="ECO:0000256" key="6">
    <source>
        <dbReference type="SAM" id="MobiDB-lite"/>
    </source>
</evidence>
<evidence type="ECO:0000305" key="7"/>
<protein>
    <recommendedName>
        <fullName>Calsyntenin-3</fullName>
    </recommendedName>
</protein>
<accession>Q5R9Q9</accession>
<name>CSTN3_PONAB</name>
<gene>
    <name type="primary">CLSTN3</name>
</gene>